<evidence type="ECO:0000250" key="1">
    <source>
        <dbReference type="UniProtKB" id="A0A0K0MCJ4"/>
    </source>
</evidence>
<evidence type="ECO:0000250" key="2">
    <source>
        <dbReference type="UniProtKB" id="Q5B0D0"/>
    </source>
</evidence>
<evidence type="ECO:0000255" key="3"/>
<evidence type="ECO:0000255" key="4">
    <source>
        <dbReference type="PROSITE-ProRule" id="PRU00258"/>
    </source>
</evidence>
<evidence type="ECO:0000255" key="5">
    <source>
        <dbReference type="PROSITE-ProRule" id="PRU01348"/>
    </source>
</evidence>
<evidence type="ECO:0000255" key="6">
    <source>
        <dbReference type="PROSITE-ProRule" id="PRU01363"/>
    </source>
</evidence>
<evidence type="ECO:0000256" key="7">
    <source>
        <dbReference type="SAM" id="MobiDB-lite"/>
    </source>
</evidence>
<evidence type="ECO:0000269" key="8">
    <source>
    </source>
</evidence>
<evidence type="ECO:0000269" key="9">
    <source>
    </source>
</evidence>
<evidence type="ECO:0000269" key="10">
    <source>
    </source>
</evidence>
<evidence type="ECO:0000303" key="11">
    <source>
    </source>
</evidence>
<feature type="chain" id="PRO_0000442165" description="Kotanin synthase">
    <location>
        <begin position="1"/>
        <end position="1663"/>
    </location>
</feature>
<feature type="domain" description="Ketosynthase family 3 (KS3)" evidence="5">
    <location>
        <begin position="301"/>
        <end position="731"/>
    </location>
</feature>
<feature type="domain" description="PKS/mFAS DH" evidence="6">
    <location>
        <begin position="1213"/>
        <end position="1523"/>
    </location>
</feature>
<feature type="domain" description="Carrier" evidence="4">
    <location>
        <begin position="1586"/>
        <end position="1663"/>
    </location>
</feature>
<feature type="region of interest" description="N-terminal acylcarrier protein transacylase domain (SAT)" evidence="3">
    <location>
        <begin position="19"/>
        <end position="168"/>
    </location>
</feature>
<feature type="region of interest" description="Malonyl-CoA:ACP transacylase (MAT) domain" evidence="3">
    <location>
        <begin position="830"/>
        <end position="1149"/>
    </location>
</feature>
<feature type="region of interest" description="Product template (PT) domain" evidence="3">
    <location>
        <begin position="1209"/>
        <end position="1527"/>
    </location>
</feature>
<feature type="region of interest" description="N-terminal hotdog fold" evidence="6">
    <location>
        <begin position="1213"/>
        <end position="1349"/>
    </location>
</feature>
<feature type="region of interest" description="C-terminal hotdog fold" evidence="6">
    <location>
        <begin position="1376"/>
        <end position="1523"/>
    </location>
</feature>
<feature type="region of interest" description="Disordered" evidence="7">
    <location>
        <begin position="1544"/>
        <end position="1580"/>
    </location>
</feature>
<feature type="active site" description="For beta-ketoacyl synthase activity" evidence="5">
    <location>
        <position position="474"/>
    </location>
</feature>
<feature type="active site" description="For beta-ketoacyl synthase activity" evidence="5">
    <location>
        <position position="609"/>
    </location>
</feature>
<feature type="active site" description="For beta-ketoacyl synthase activity" evidence="5">
    <location>
        <position position="650"/>
    </location>
</feature>
<feature type="active site" description="Proton acceptor; for dehydratase activity" evidence="6">
    <location>
        <position position="1245"/>
    </location>
</feature>
<feature type="active site" description="Proton donor; for dehydratase activity" evidence="6">
    <location>
        <position position="1434"/>
    </location>
</feature>
<feature type="modified residue" description="O-(pantetheine 4'-phosphoryl)serine" evidence="4">
    <location>
        <position position="1623"/>
    </location>
</feature>
<proteinExistence type="inferred from homology"/>
<keyword id="KW-0012">Acyltransferase</keyword>
<keyword id="KW-0596">Phosphopantetheine</keyword>
<keyword id="KW-0597">Phosphoprotein</keyword>
<keyword id="KW-1185">Reference proteome</keyword>
<keyword id="KW-0808">Transferase</keyword>
<reference key="1">
    <citation type="journal article" date="2007" name="Nat. Biotechnol.">
        <title>Genome sequencing and analysis of the versatile cell factory Aspergillus niger CBS 513.88.</title>
        <authorList>
            <person name="Pel H.J."/>
            <person name="de Winde J.H."/>
            <person name="Archer D.B."/>
            <person name="Dyer P.S."/>
            <person name="Hofmann G."/>
            <person name="Schaap P.J."/>
            <person name="Turner G."/>
            <person name="de Vries R.P."/>
            <person name="Albang R."/>
            <person name="Albermann K."/>
            <person name="Andersen M.R."/>
            <person name="Bendtsen J.D."/>
            <person name="Benen J.A.E."/>
            <person name="van den Berg M."/>
            <person name="Breestraat S."/>
            <person name="Caddick M.X."/>
            <person name="Contreras R."/>
            <person name="Cornell M."/>
            <person name="Coutinho P.M."/>
            <person name="Danchin E.G.J."/>
            <person name="Debets A.J.M."/>
            <person name="Dekker P."/>
            <person name="van Dijck P.W.M."/>
            <person name="van Dijk A."/>
            <person name="Dijkhuizen L."/>
            <person name="Driessen A.J.M."/>
            <person name="d'Enfert C."/>
            <person name="Geysens S."/>
            <person name="Goosen C."/>
            <person name="Groot G.S.P."/>
            <person name="de Groot P.W.J."/>
            <person name="Guillemette T."/>
            <person name="Henrissat B."/>
            <person name="Herweijer M."/>
            <person name="van den Hombergh J.P.T.W."/>
            <person name="van den Hondel C.A.M.J.J."/>
            <person name="van der Heijden R.T.J.M."/>
            <person name="van der Kaaij R.M."/>
            <person name="Klis F.M."/>
            <person name="Kools H.J."/>
            <person name="Kubicek C.P."/>
            <person name="van Kuyk P.A."/>
            <person name="Lauber J."/>
            <person name="Lu X."/>
            <person name="van der Maarel M.J.E.C."/>
            <person name="Meulenberg R."/>
            <person name="Menke H."/>
            <person name="Mortimer M.A."/>
            <person name="Nielsen J."/>
            <person name="Oliver S.G."/>
            <person name="Olsthoorn M."/>
            <person name="Pal K."/>
            <person name="van Peij N.N.M.E."/>
            <person name="Ram A.F.J."/>
            <person name="Rinas U."/>
            <person name="Roubos J.A."/>
            <person name="Sagt C.M.J."/>
            <person name="Schmoll M."/>
            <person name="Sun J."/>
            <person name="Ussery D."/>
            <person name="Varga J."/>
            <person name="Vervecken W."/>
            <person name="van de Vondervoort P.J.J."/>
            <person name="Wedler H."/>
            <person name="Woesten H.A.B."/>
            <person name="Zeng A.-P."/>
            <person name="van Ooyen A.J.J."/>
            <person name="Visser J."/>
            <person name="Stam H."/>
        </authorList>
    </citation>
    <scope>NUCLEOTIDE SEQUENCE [LARGE SCALE GENOMIC DNA]</scope>
    <source>
        <strain>ATCC MYA-4892 / CBS 513.88 / FGSC A1513</strain>
    </source>
</reference>
<reference key="2">
    <citation type="journal article" date="2007" name="ChemBioChem">
        <title>Regio- and stereoselective intermolecular oxidative phenol coupling in kotanin biosynthesis by Aspergillus niger.</title>
        <authorList>
            <person name="Huettel W."/>
            <person name="Mueller M."/>
        </authorList>
    </citation>
    <scope>FUNCTION</scope>
</reference>
<reference key="3">
    <citation type="journal article" date="2012" name="Angew. Chem. Int. Ed.">
        <title>Regio- and stereoselective oxidative phenol coupling in Aspergillus niger.</title>
        <authorList>
            <person name="Gil Girol C."/>
            <person name="Fisch K.M."/>
            <person name="Heinekamp T."/>
            <person name="Guenther S."/>
            <person name="Huettel W."/>
            <person name="Piel J."/>
            <person name="Brakhage A.A."/>
            <person name="Mueller M."/>
        </authorList>
    </citation>
    <scope>FUNCTION</scope>
    <scope>DISRUPTION PHENOTYPE</scope>
</reference>
<reference key="4">
    <citation type="journal article" date="2015" name="J. Am. Chem. Soc.">
        <title>Cytochrome P450-catalyzed regio- and stereoselective phenol coupling of fungal natural products.</title>
        <authorList>
            <person name="Mazzaferro L.S."/>
            <person name="Huettel W."/>
            <person name="Fries A."/>
            <person name="Mueller M."/>
        </authorList>
    </citation>
    <scope>FUNCTION</scope>
</reference>
<accession>A2QK66</accession>
<comment type="function">
    <text evidence="8 9 10">Non-reducing polyketide synthase; part of the gene cluster that mediates the biosynthesis of the bicoumarin kotanin (PubMed:22945023, PubMed:26389790). The non-reducing polyketide synthase ktnS first catalyzes the formation of the pentaketidic 4,7-dihydroxy-5-methylcoumarin from acetyl coenzyme A and 4 malonyl coenzyme A molecules (PubMed:17315249, PubMed:22945023). Further O-methylation by ktnB leads to the formation of 7-demethylsiderin (PubMed:17315249, PubMed:22945023, PubMed:26389790). Then, an oxidative phenol coupling catalyzed by the cytochrome P450 monooxygenase ktnC forms the 8,8'-dimer P-orlandin via dimerization the monomeric precursor, 7-demethylsiderin (PubMed:26389790). P-orlandin is subsequently O-methylated in a stepwise fashion to demethylkotanin and kotanin (PubMed:22945023).</text>
</comment>
<comment type="cofactor">
    <cofactor evidence="1">
        <name>pantetheine 4'-phosphate</name>
        <dbReference type="ChEBI" id="CHEBI:47942"/>
    </cofactor>
    <text evidence="3">Binds 1 phosphopantetheine covalently.</text>
</comment>
<comment type="pathway">
    <text evidence="9">Secondary metabolite biosynthesis.</text>
</comment>
<comment type="domain">
    <text evidence="2">Multidomain protein; including a starter unit:ACP transacylase (SAT) that selects the starter unit; a ketosynthase (KS) that catalyzes repeated decarboxylative condensation to elongate the polyketide backbone; a malonyl-CoA:ACP transacylase (MAT) that selects and transfers the extender unit malonyl-CoA; a product template (PT) domain that controls the immediate cyclization regioselectivity of the reactive polyketide backbone; and an acyl-carrier protein (ACP) that serves as the tether of the growing and completed polyketide via its phosphopantetheinyl arm (By similarity).</text>
</comment>
<comment type="disruption phenotype">
    <text evidence="9">Leads to complete loss in coumarin biosynthesis (PubMed:22945023).</text>
</comment>
<dbReference type="EC" id="2.3.1.-" evidence="9"/>
<dbReference type="EMBL" id="AM270096">
    <property type="protein sequence ID" value="CAK47960.1"/>
    <property type="molecule type" value="Genomic_DNA"/>
</dbReference>
<dbReference type="RefSeq" id="XP_001402309.2">
    <property type="nucleotide sequence ID" value="XM_001402272.2"/>
</dbReference>
<dbReference type="SMR" id="A2QK66"/>
<dbReference type="EnsemblFungi" id="CAK47960">
    <property type="protein sequence ID" value="CAK47960"/>
    <property type="gene ID" value="An04g09530"/>
</dbReference>
<dbReference type="GeneID" id="4991356"/>
<dbReference type="KEGG" id="ang:An04g09530"/>
<dbReference type="VEuPathDB" id="FungiDB:An04g09530"/>
<dbReference type="HOGENOM" id="CLU_000022_6_0_1"/>
<dbReference type="Proteomes" id="UP000006706">
    <property type="component" value="Chromosome 6L"/>
</dbReference>
<dbReference type="GO" id="GO:0004312">
    <property type="term" value="F:fatty acid synthase activity"/>
    <property type="evidence" value="ECO:0007669"/>
    <property type="project" value="TreeGrafter"/>
</dbReference>
<dbReference type="GO" id="GO:0031177">
    <property type="term" value="F:phosphopantetheine binding"/>
    <property type="evidence" value="ECO:0007669"/>
    <property type="project" value="InterPro"/>
</dbReference>
<dbReference type="GO" id="GO:0016218">
    <property type="term" value="F:polyketide synthase activity"/>
    <property type="evidence" value="ECO:0000315"/>
    <property type="project" value="UniProt"/>
</dbReference>
<dbReference type="GO" id="GO:1900596">
    <property type="term" value="P:(+)-kotanin biosynthetic process"/>
    <property type="evidence" value="ECO:0000315"/>
    <property type="project" value="GO_Central"/>
</dbReference>
<dbReference type="GO" id="GO:0006633">
    <property type="term" value="P:fatty acid biosynthetic process"/>
    <property type="evidence" value="ECO:0007669"/>
    <property type="project" value="TreeGrafter"/>
</dbReference>
<dbReference type="GO" id="GO:0019748">
    <property type="term" value="P:secondary metabolic process"/>
    <property type="evidence" value="ECO:0000303"/>
    <property type="project" value="AspGD"/>
</dbReference>
<dbReference type="CDD" id="cd00833">
    <property type="entry name" value="PKS"/>
    <property type="match status" value="1"/>
</dbReference>
<dbReference type="Gene3D" id="3.30.70.3290">
    <property type="match status" value="1"/>
</dbReference>
<dbReference type="Gene3D" id="3.40.47.10">
    <property type="match status" value="1"/>
</dbReference>
<dbReference type="Gene3D" id="1.10.1200.10">
    <property type="entry name" value="ACP-like"/>
    <property type="match status" value="1"/>
</dbReference>
<dbReference type="Gene3D" id="3.40.366.10">
    <property type="entry name" value="Malonyl-Coenzyme A Acyl Carrier Protein, domain 2"/>
    <property type="match status" value="1"/>
</dbReference>
<dbReference type="Gene3D" id="3.10.129.110">
    <property type="entry name" value="Polyketide synthase dehydratase"/>
    <property type="match status" value="1"/>
</dbReference>
<dbReference type="InterPro" id="IPR001227">
    <property type="entry name" value="Ac_transferase_dom_sf"/>
</dbReference>
<dbReference type="InterPro" id="IPR036736">
    <property type="entry name" value="ACP-like_sf"/>
</dbReference>
<dbReference type="InterPro" id="IPR014043">
    <property type="entry name" value="Acyl_transferase_dom"/>
</dbReference>
<dbReference type="InterPro" id="IPR016035">
    <property type="entry name" value="Acyl_Trfase/lysoPLipase"/>
</dbReference>
<dbReference type="InterPro" id="IPR014031">
    <property type="entry name" value="Ketoacyl_synth_C"/>
</dbReference>
<dbReference type="InterPro" id="IPR014030">
    <property type="entry name" value="Ketoacyl_synth_N"/>
</dbReference>
<dbReference type="InterPro" id="IPR016036">
    <property type="entry name" value="Malonyl_transacylase_ACP-bd"/>
</dbReference>
<dbReference type="InterPro" id="IPR020841">
    <property type="entry name" value="PKS_Beta-ketoAc_synthase_dom"/>
</dbReference>
<dbReference type="InterPro" id="IPR042104">
    <property type="entry name" value="PKS_dehydratase_sf"/>
</dbReference>
<dbReference type="InterPro" id="IPR049900">
    <property type="entry name" value="PKS_mFAS_DH"/>
</dbReference>
<dbReference type="InterPro" id="IPR050091">
    <property type="entry name" value="PKS_NRPS_Biosynth_Enz"/>
</dbReference>
<dbReference type="InterPro" id="IPR020806">
    <property type="entry name" value="PKS_PP-bd"/>
</dbReference>
<dbReference type="InterPro" id="IPR009081">
    <property type="entry name" value="PP-bd_ACP"/>
</dbReference>
<dbReference type="InterPro" id="IPR030918">
    <property type="entry name" value="PT_fungal_PKS"/>
</dbReference>
<dbReference type="InterPro" id="IPR032088">
    <property type="entry name" value="SAT"/>
</dbReference>
<dbReference type="InterPro" id="IPR016039">
    <property type="entry name" value="Thiolase-like"/>
</dbReference>
<dbReference type="NCBIfam" id="TIGR04532">
    <property type="entry name" value="PT_fungal_PKS"/>
    <property type="match status" value="1"/>
</dbReference>
<dbReference type="PANTHER" id="PTHR43775">
    <property type="entry name" value="FATTY ACID SYNTHASE"/>
    <property type="match status" value="1"/>
</dbReference>
<dbReference type="PANTHER" id="PTHR43775:SF37">
    <property type="entry name" value="SI:DKEY-61P9.11"/>
    <property type="match status" value="1"/>
</dbReference>
<dbReference type="Pfam" id="PF00698">
    <property type="entry name" value="Acyl_transf_1"/>
    <property type="match status" value="1"/>
</dbReference>
<dbReference type="Pfam" id="PF22621">
    <property type="entry name" value="CurL-like_PKS_C"/>
    <property type="match status" value="1"/>
</dbReference>
<dbReference type="Pfam" id="PF00109">
    <property type="entry name" value="ketoacyl-synt"/>
    <property type="match status" value="1"/>
</dbReference>
<dbReference type="Pfam" id="PF02801">
    <property type="entry name" value="Ketoacyl-synt_C"/>
    <property type="match status" value="1"/>
</dbReference>
<dbReference type="Pfam" id="PF00550">
    <property type="entry name" value="PP-binding"/>
    <property type="match status" value="1"/>
</dbReference>
<dbReference type="Pfam" id="PF16073">
    <property type="entry name" value="SAT"/>
    <property type="match status" value="1"/>
</dbReference>
<dbReference type="SMART" id="SM00827">
    <property type="entry name" value="PKS_AT"/>
    <property type="match status" value="1"/>
</dbReference>
<dbReference type="SMART" id="SM00825">
    <property type="entry name" value="PKS_KS"/>
    <property type="match status" value="1"/>
</dbReference>
<dbReference type="SMART" id="SM00823">
    <property type="entry name" value="PKS_PP"/>
    <property type="match status" value="1"/>
</dbReference>
<dbReference type="SUPFAM" id="SSF47336">
    <property type="entry name" value="ACP-like"/>
    <property type="match status" value="1"/>
</dbReference>
<dbReference type="SUPFAM" id="SSF52151">
    <property type="entry name" value="FabD/lysophospholipase-like"/>
    <property type="match status" value="1"/>
</dbReference>
<dbReference type="SUPFAM" id="SSF55048">
    <property type="entry name" value="Probable ACP-binding domain of malonyl-CoA ACP transacylase"/>
    <property type="match status" value="1"/>
</dbReference>
<dbReference type="SUPFAM" id="SSF53901">
    <property type="entry name" value="Thiolase-like"/>
    <property type="match status" value="1"/>
</dbReference>
<dbReference type="PROSITE" id="PS50075">
    <property type="entry name" value="CARRIER"/>
    <property type="match status" value="1"/>
</dbReference>
<dbReference type="PROSITE" id="PS52004">
    <property type="entry name" value="KS3_2"/>
    <property type="match status" value="1"/>
</dbReference>
<dbReference type="PROSITE" id="PS52019">
    <property type="entry name" value="PKS_MFAS_DH"/>
    <property type="match status" value="1"/>
</dbReference>
<protein>
    <recommendedName>
        <fullName evidence="11">Kotanin synthase</fullName>
        <ecNumber evidence="9">2.3.1.-</ecNumber>
    </recommendedName>
    <alternativeName>
        <fullName evidence="11">Kotanin biosynthesis cluster protein S</fullName>
    </alternativeName>
    <alternativeName>
        <fullName evidence="11">Non-reducing polyketide synthase ktnS</fullName>
    </alternativeName>
</protein>
<sequence>MLADMCVGVYKAAMNYEIRPHEFSFNTQESLFTGLGLGFLAATAVVASPSLLDLPITAAEVVRIAMRAGILLYQKSQDLEQLSLDSSLESWTTVVRGLDESIVRGELEKFNKSMETPPSSRIYISVVEPDGSVFISGPPSGLREFFNKSGKVQSAPRAPLPVYGGPCHAAHLYDRTHTEWVVSKVNPEIASRRLSGHPLVLSMGDGQPLAGENARDLFESATYVLLTSIIRWDSVLAAVKKLPHWKQDTKLQLETFRPSSPAVHGLISAVQSEYPDCTVSVDDLGDWIIDNSLEPPTIPIDSRIAVVGMSCRLPGGSDDLQRFWELLEDGRDVHQKVPGNRYDVESHTDMTGRRLNTSHTPFGCFIDSPGLFDASFFDMSPREAGQTDPTHRLALLTAYEALEYSGYVPNRTRSTTRDRVGTVYGQCSDDYREANAGQNIDMYFIPGNYRAFAPGRISYFFKFSGPSFNCDTACSASLAAVQIACSALIRGEADMVVAGGLNILTGSDSFAGLSRGFFLSKTGNCKVFDDGADGYCRADGIGSIVLKRLSDAQQDNDNILGVILGTATNHSSHAISITHPHAPTQEHLYRSVLSQAGIGPHDVDLVEMHGTGTQAGDAAEIESVTRVFSPPVPRRSHPLYISSVKANLGHGEAAAGITALMKALLIFQHNAIPRHVGIKTALNSKFPDLERLNVHIPKETIPWPYRSNRKRYVMINNFSAAGGNTSLLLEEPPVRPDPQGPPQTRFVVALSAKSTTSLRRNLESLITWLEGNRSARLASLAYTTTARRMHHKHRIAVHGASVAEIIQALHQRGSRAELGLLVSKPPSVAFIFSGQGSFYAGVGSQLFKEYPPYREQLQRLDEICQQNGFGSILPAITDTDADVSQLSALVTQLTTVCVQIALCRLWRTLGVKPAVVIGASLGEYAALYAAGALSASDAIFLVGQRTLLMQKLCTANSYGMLAVQGSVDDIRRCVQDRTYEVACINAPRSITICASIKDIVDIQQSLVSQGYRSVKLNVPFAFHSSQMDPILDRYEEIAKAVSFRSLQIPLISSTLADAAVQSRSLVASLFLRENTRAPARFAEAVAKAQDMGLVNSHTVWVEIGVHSTYSGAVRATVADLQAIVPSLRSDETNWHTLAVSMCTLQETGVPLDWNEWYRPFEPEVRLLDLPSYRWDLKNHWIQYNGDWLLVKDKRPRTDQISAATPSLRTALVHQIMEESFRPDGGEIVVQSDVMDKEFFAVASGHKMSGRPLVSVFSYPDIAFTLARYMYSRLKPESPLPAMDFGQVRVLQGLLPRKDRSKPQWVRMRMRADPQCAALQLSISGLSDESSRHVEEKLASGVVRCGDRQSWQDEWADYAHLLTTRIVTLQQMAENGQASRVSRDLVYTLFKNIVDYADHYRGIQSAVLHGLEAVADVILAPSNDSRWTAPPHHIDPITHVGGLVLNAGHATDHHNTIYVMEGWKSMRFAEELVAGELYRSYVKMNPARDGSGFFVGDVYVMREDHIVGKVRGMTLRPLPRILMNRFFDPPDDGDGLATQHIQPHDLPQVQHQPSPTTDSGPDDDPKDPNTGPLTPEVDLPVAPSVEKANTKLVRGALALLAAETGVEPDGLTDETEVSALGIDSLLSLVLVEKFATELQVNIQSSFFLESPTIRELKEYLTASW</sequence>
<name>KTNS_ASPNC</name>
<organism>
    <name type="scientific">Aspergillus niger (strain ATCC MYA-4892 / CBS 513.88 / FGSC A1513)</name>
    <dbReference type="NCBI Taxonomy" id="425011"/>
    <lineage>
        <taxon>Eukaryota</taxon>
        <taxon>Fungi</taxon>
        <taxon>Dikarya</taxon>
        <taxon>Ascomycota</taxon>
        <taxon>Pezizomycotina</taxon>
        <taxon>Eurotiomycetes</taxon>
        <taxon>Eurotiomycetidae</taxon>
        <taxon>Eurotiales</taxon>
        <taxon>Aspergillaceae</taxon>
        <taxon>Aspergillus</taxon>
        <taxon>Aspergillus subgen. Circumdati</taxon>
    </lineage>
</organism>
<gene>
    <name evidence="11" type="primary">ktnS</name>
    <name type="ORF">An04g09530</name>
</gene>